<keyword id="KW-0413">Isomerase</keyword>
<keyword id="KW-0460">Magnesium</keyword>
<keyword id="KW-0479">Metal-binding</keyword>
<keyword id="KW-0597">Phosphoprotein</keyword>
<keyword id="KW-1185">Reference proteome</keyword>
<name>GLMM_ACTP2</name>
<protein>
    <recommendedName>
        <fullName evidence="1">Phosphoglucosamine mutase</fullName>
        <ecNumber evidence="1">5.4.2.10</ecNumber>
    </recommendedName>
</protein>
<dbReference type="EC" id="5.4.2.10" evidence="1"/>
<dbReference type="EMBL" id="CP000569">
    <property type="protein sequence ID" value="ABN74538.1"/>
    <property type="molecule type" value="Genomic_DNA"/>
</dbReference>
<dbReference type="RefSeq" id="WP_005598675.1">
    <property type="nucleotide sequence ID" value="NC_009053.1"/>
</dbReference>
<dbReference type="SMR" id="A3N2A2"/>
<dbReference type="STRING" id="416269.APL_1454"/>
<dbReference type="EnsemblBacteria" id="ABN74538">
    <property type="protein sequence ID" value="ABN74538"/>
    <property type="gene ID" value="APL_1454"/>
</dbReference>
<dbReference type="GeneID" id="48599697"/>
<dbReference type="KEGG" id="apl:APL_1454"/>
<dbReference type="eggNOG" id="COG1109">
    <property type="taxonomic scope" value="Bacteria"/>
</dbReference>
<dbReference type="HOGENOM" id="CLU_016950_7_0_6"/>
<dbReference type="Proteomes" id="UP000001432">
    <property type="component" value="Chromosome"/>
</dbReference>
<dbReference type="GO" id="GO:0005829">
    <property type="term" value="C:cytosol"/>
    <property type="evidence" value="ECO:0007669"/>
    <property type="project" value="TreeGrafter"/>
</dbReference>
<dbReference type="GO" id="GO:0000287">
    <property type="term" value="F:magnesium ion binding"/>
    <property type="evidence" value="ECO:0007669"/>
    <property type="project" value="UniProtKB-UniRule"/>
</dbReference>
<dbReference type="GO" id="GO:0008966">
    <property type="term" value="F:phosphoglucosamine mutase activity"/>
    <property type="evidence" value="ECO:0007669"/>
    <property type="project" value="UniProtKB-UniRule"/>
</dbReference>
<dbReference type="GO" id="GO:0004615">
    <property type="term" value="F:phosphomannomutase activity"/>
    <property type="evidence" value="ECO:0007669"/>
    <property type="project" value="TreeGrafter"/>
</dbReference>
<dbReference type="GO" id="GO:0005975">
    <property type="term" value="P:carbohydrate metabolic process"/>
    <property type="evidence" value="ECO:0007669"/>
    <property type="project" value="InterPro"/>
</dbReference>
<dbReference type="GO" id="GO:0009252">
    <property type="term" value="P:peptidoglycan biosynthetic process"/>
    <property type="evidence" value="ECO:0007669"/>
    <property type="project" value="TreeGrafter"/>
</dbReference>
<dbReference type="GO" id="GO:0006048">
    <property type="term" value="P:UDP-N-acetylglucosamine biosynthetic process"/>
    <property type="evidence" value="ECO:0007669"/>
    <property type="project" value="TreeGrafter"/>
</dbReference>
<dbReference type="CDD" id="cd05802">
    <property type="entry name" value="GlmM"/>
    <property type="match status" value="1"/>
</dbReference>
<dbReference type="FunFam" id="3.30.310.50:FF:000001">
    <property type="entry name" value="Phosphoglucosamine mutase"/>
    <property type="match status" value="1"/>
</dbReference>
<dbReference type="FunFam" id="3.40.120.10:FF:000001">
    <property type="entry name" value="Phosphoglucosamine mutase"/>
    <property type="match status" value="1"/>
</dbReference>
<dbReference type="FunFam" id="3.40.120.10:FF:000002">
    <property type="entry name" value="Phosphoglucosamine mutase"/>
    <property type="match status" value="1"/>
</dbReference>
<dbReference type="Gene3D" id="3.40.120.10">
    <property type="entry name" value="Alpha-D-Glucose-1,6-Bisphosphate, subunit A, domain 3"/>
    <property type="match status" value="3"/>
</dbReference>
<dbReference type="Gene3D" id="3.30.310.50">
    <property type="entry name" value="Alpha-D-phosphohexomutase, C-terminal domain"/>
    <property type="match status" value="1"/>
</dbReference>
<dbReference type="HAMAP" id="MF_01554_B">
    <property type="entry name" value="GlmM_B"/>
    <property type="match status" value="1"/>
</dbReference>
<dbReference type="InterPro" id="IPR005844">
    <property type="entry name" value="A-D-PHexomutase_a/b/a-I"/>
</dbReference>
<dbReference type="InterPro" id="IPR016055">
    <property type="entry name" value="A-D-PHexomutase_a/b/a-I/II/III"/>
</dbReference>
<dbReference type="InterPro" id="IPR005845">
    <property type="entry name" value="A-D-PHexomutase_a/b/a-II"/>
</dbReference>
<dbReference type="InterPro" id="IPR005846">
    <property type="entry name" value="A-D-PHexomutase_a/b/a-III"/>
</dbReference>
<dbReference type="InterPro" id="IPR005843">
    <property type="entry name" value="A-D-PHexomutase_C"/>
</dbReference>
<dbReference type="InterPro" id="IPR036900">
    <property type="entry name" value="A-D-PHexomutase_C_sf"/>
</dbReference>
<dbReference type="InterPro" id="IPR016066">
    <property type="entry name" value="A-D-PHexomutase_CS"/>
</dbReference>
<dbReference type="InterPro" id="IPR005841">
    <property type="entry name" value="Alpha-D-phosphohexomutase_SF"/>
</dbReference>
<dbReference type="InterPro" id="IPR006352">
    <property type="entry name" value="GlmM_bact"/>
</dbReference>
<dbReference type="InterPro" id="IPR050060">
    <property type="entry name" value="Phosphoglucosamine_mutase"/>
</dbReference>
<dbReference type="NCBIfam" id="TIGR01455">
    <property type="entry name" value="glmM"/>
    <property type="match status" value="1"/>
</dbReference>
<dbReference type="NCBIfam" id="NF008139">
    <property type="entry name" value="PRK10887.1"/>
    <property type="match status" value="1"/>
</dbReference>
<dbReference type="PANTHER" id="PTHR42946:SF1">
    <property type="entry name" value="PHOSPHOGLUCOMUTASE (ALPHA-D-GLUCOSE-1,6-BISPHOSPHATE-DEPENDENT)"/>
    <property type="match status" value="1"/>
</dbReference>
<dbReference type="PANTHER" id="PTHR42946">
    <property type="entry name" value="PHOSPHOHEXOSE MUTASE"/>
    <property type="match status" value="1"/>
</dbReference>
<dbReference type="Pfam" id="PF02878">
    <property type="entry name" value="PGM_PMM_I"/>
    <property type="match status" value="1"/>
</dbReference>
<dbReference type="Pfam" id="PF02879">
    <property type="entry name" value="PGM_PMM_II"/>
    <property type="match status" value="1"/>
</dbReference>
<dbReference type="Pfam" id="PF02880">
    <property type="entry name" value="PGM_PMM_III"/>
    <property type="match status" value="1"/>
</dbReference>
<dbReference type="Pfam" id="PF00408">
    <property type="entry name" value="PGM_PMM_IV"/>
    <property type="match status" value="1"/>
</dbReference>
<dbReference type="PRINTS" id="PR00509">
    <property type="entry name" value="PGMPMM"/>
</dbReference>
<dbReference type="SUPFAM" id="SSF55957">
    <property type="entry name" value="Phosphoglucomutase, C-terminal domain"/>
    <property type="match status" value="1"/>
</dbReference>
<dbReference type="SUPFAM" id="SSF53738">
    <property type="entry name" value="Phosphoglucomutase, first 3 domains"/>
    <property type="match status" value="3"/>
</dbReference>
<dbReference type="PROSITE" id="PS00710">
    <property type="entry name" value="PGM_PMM"/>
    <property type="match status" value="1"/>
</dbReference>
<reference key="1">
    <citation type="journal article" date="2008" name="J. Bacteriol.">
        <title>The complete genome sequence of Actinobacillus pleuropneumoniae L20 (serotype 5b).</title>
        <authorList>
            <person name="Foote S.J."/>
            <person name="Bosse J.T."/>
            <person name="Bouevitch A.B."/>
            <person name="Langford P.R."/>
            <person name="Young N.M."/>
            <person name="Nash J.H.E."/>
        </authorList>
    </citation>
    <scope>NUCLEOTIDE SEQUENCE [LARGE SCALE GENOMIC DNA]</scope>
    <source>
        <strain>L20</strain>
    </source>
</reference>
<accession>A3N2A2</accession>
<comment type="function">
    <text evidence="1">Catalyzes the conversion of glucosamine-6-phosphate to glucosamine-1-phosphate.</text>
</comment>
<comment type="catalytic activity">
    <reaction evidence="1">
        <text>alpha-D-glucosamine 1-phosphate = D-glucosamine 6-phosphate</text>
        <dbReference type="Rhea" id="RHEA:23424"/>
        <dbReference type="ChEBI" id="CHEBI:58516"/>
        <dbReference type="ChEBI" id="CHEBI:58725"/>
        <dbReference type="EC" id="5.4.2.10"/>
    </reaction>
</comment>
<comment type="cofactor">
    <cofactor evidence="1">
        <name>Mg(2+)</name>
        <dbReference type="ChEBI" id="CHEBI:18420"/>
    </cofactor>
    <text evidence="1">Binds 1 Mg(2+) ion per subunit.</text>
</comment>
<comment type="PTM">
    <text evidence="1">Activated by phosphorylation.</text>
</comment>
<comment type="similarity">
    <text evidence="1">Belongs to the phosphohexose mutase family.</text>
</comment>
<feature type="chain" id="PRO_0000301271" description="Phosphoglucosamine mutase">
    <location>
        <begin position="1"/>
        <end position="444"/>
    </location>
</feature>
<feature type="active site" description="Phosphoserine intermediate" evidence="1">
    <location>
        <position position="102"/>
    </location>
</feature>
<feature type="binding site" description="via phosphate group" evidence="1">
    <location>
        <position position="102"/>
    </location>
    <ligand>
        <name>Mg(2+)</name>
        <dbReference type="ChEBI" id="CHEBI:18420"/>
    </ligand>
</feature>
<feature type="binding site" evidence="1">
    <location>
        <position position="241"/>
    </location>
    <ligand>
        <name>Mg(2+)</name>
        <dbReference type="ChEBI" id="CHEBI:18420"/>
    </ligand>
</feature>
<feature type="binding site" evidence="1">
    <location>
        <position position="243"/>
    </location>
    <ligand>
        <name>Mg(2+)</name>
        <dbReference type="ChEBI" id="CHEBI:18420"/>
    </ligand>
</feature>
<feature type="binding site" evidence="1">
    <location>
        <position position="245"/>
    </location>
    <ligand>
        <name>Mg(2+)</name>
        <dbReference type="ChEBI" id="CHEBI:18420"/>
    </ligand>
</feature>
<feature type="modified residue" description="Phosphoserine" evidence="1">
    <location>
        <position position="102"/>
    </location>
</feature>
<gene>
    <name evidence="1" type="primary">glmM</name>
    <name type="ordered locus">APL_1454</name>
</gene>
<organism>
    <name type="scientific">Actinobacillus pleuropneumoniae serotype 5b (strain L20)</name>
    <dbReference type="NCBI Taxonomy" id="416269"/>
    <lineage>
        <taxon>Bacteria</taxon>
        <taxon>Pseudomonadati</taxon>
        <taxon>Pseudomonadota</taxon>
        <taxon>Gammaproteobacteria</taxon>
        <taxon>Pasteurellales</taxon>
        <taxon>Pasteurellaceae</taxon>
        <taxon>Actinobacillus</taxon>
    </lineage>
</organism>
<proteinExistence type="inferred from homology"/>
<sequence length="444" mass="47313">MAERKYFGTDGVRGKVGQFPITPDFALKLGWAAGKILATQGTKQVLIGKDTRISGYMLESALEAGLAAAGLSAAFVGPMPTPAIAYLTRTFRAEAGIVISASHNPYYDNGIKFFSSVGEKLPDEVEEAIEALLDQPMDCVESAQLGKAMRINDAAGRYIEFCKGTFPANASLKGYKIVVDCANGATYHIAPNVMRELGAEVIEIGTKPDGLNINEKCGATDIKALQKVVVESGADVGLAYDGDGDRIMMVDHLGNKVDGDQILFIIAREALRSGKLHGGVVGTLMSNMGLEVALKHLAIPFTRANVGDRYVLEQLKEKGWKLGGENSGHIIVLDKNTTGDGIIASLEVLAAMEAHKMSLNDLARAVPLFPQVLINVRFEGGKNPLESDAVKAVAADVEKRLAGKGRILLRKSGTEPLIRVMVECEDGALAQSCAEEIVEAVKSN</sequence>
<evidence type="ECO:0000255" key="1">
    <source>
        <dbReference type="HAMAP-Rule" id="MF_01554"/>
    </source>
</evidence>